<feature type="chain" id="PRO_1000114705" description="Potassium-transporting ATPase potassium-binding subunit">
    <location>
        <begin position="1"/>
        <end position="559"/>
    </location>
</feature>
<feature type="transmembrane region" description="Helical" evidence="1">
    <location>
        <begin position="5"/>
        <end position="25"/>
    </location>
</feature>
<feature type="transmembrane region" description="Helical" evidence="1">
    <location>
        <begin position="27"/>
        <end position="47"/>
    </location>
</feature>
<feature type="transmembrane region" description="Helical" evidence="1">
    <location>
        <begin position="63"/>
        <end position="83"/>
    </location>
</feature>
<feature type="transmembrane region" description="Helical" evidence="1">
    <location>
        <begin position="132"/>
        <end position="152"/>
    </location>
</feature>
<feature type="transmembrane region" description="Helical" evidence="1">
    <location>
        <begin position="170"/>
        <end position="190"/>
    </location>
</feature>
<feature type="transmembrane region" description="Helical" evidence="1">
    <location>
        <begin position="253"/>
        <end position="273"/>
    </location>
</feature>
<feature type="transmembrane region" description="Helical" evidence="1">
    <location>
        <begin position="283"/>
        <end position="303"/>
    </location>
</feature>
<feature type="transmembrane region" description="Helical" evidence="1">
    <location>
        <begin position="327"/>
        <end position="347"/>
    </location>
</feature>
<feature type="transmembrane region" description="Helical" evidence="1">
    <location>
        <begin position="356"/>
        <end position="376"/>
    </location>
</feature>
<feature type="transmembrane region" description="Helical" evidence="1">
    <location>
        <begin position="379"/>
        <end position="399"/>
    </location>
</feature>
<feature type="transmembrane region" description="Helical" evidence="1">
    <location>
        <begin position="416"/>
        <end position="436"/>
    </location>
</feature>
<feature type="transmembrane region" description="Helical" evidence="1">
    <location>
        <begin position="484"/>
        <end position="504"/>
    </location>
</feature>
<feature type="transmembrane region" description="Helical" evidence="1">
    <location>
        <begin position="524"/>
        <end position="544"/>
    </location>
</feature>
<keyword id="KW-0997">Cell inner membrane</keyword>
<keyword id="KW-1003">Cell membrane</keyword>
<keyword id="KW-0406">Ion transport</keyword>
<keyword id="KW-0472">Membrane</keyword>
<keyword id="KW-0630">Potassium</keyword>
<keyword id="KW-0633">Potassium transport</keyword>
<keyword id="KW-0812">Transmembrane</keyword>
<keyword id="KW-1133">Transmembrane helix</keyword>
<keyword id="KW-0813">Transport</keyword>
<comment type="function">
    <text evidence="1">Part of the high-affinity ATP-driven potassium transport (or Kdp) system, which catalyzes the hydrolysis of ATP coupled with the electrogenic transport of potassium into the cytoplasm. This subunit binds the periplasmic potassium ions and delivers the ions to the membrane domain of KdpB through an intramembrane tunnel.</text>
</comment>
<comment type="subunit">
    <text evidence="1">The system is composed of three essential subunits: KdpA, KdpB and KdpC.</text>
</comment>
<comment type="subcellular location">
    <subcellularLocation>
        <location evidence="1">Cell inner membrane</location>
        <topology evidence="1">Multi-pass membrane protein</topology>
    </subcellularLocation>
</comment>
<comment type="similarity">
    <text evidence="1">Belongs to the KdpA family.</text>
</comment>
<reference key="1">
    <citation type="journal article" date="2011" name="J. Bacteriol.">
        <title>Comparative genomics of 28 Salmonella enterica isolates: evidence for CRISPR-mediated adaptive sublineage evolution.</title>
        <authorList>
            <person name="Fricke W.F."/>
            <person name="Mammel M.K."/>
            <person name="McDermott P.F."/>
            <person name="Tartera C."/>
            <person name="White D.G."/>
            <person name="Leclerc J.E."/>
            <person name="Ravel J."/>
            <person name="Cebula T.A."/>
        </authorList>
    </citation>
    <scope>NUCLEOTIDE SEQUENCE [LARGE SCALE GENOMIC DNA]</scope>
    <source>
        <strain>CVM19633</strain>
    </source>
</reference>
<gene>
    <name evidence="1" type="primary">kdpA</name>
    <name type="ordered locus">SeSA_A0864</name>
</gene>
<sequence length="559" mass="59379">MAAQGFLLIASFLLILLVLAKPLGSGLARLIAAVPLPGVAGIERILWRTLGITDHEMNWRQYLLALLTLNLLGLGILFCLLFWQEWLPLNPQRLPGLSWDLALNTAVSFVTNTNWQAYSGESTLSYFSQMAGLTVQNFLSAATGIAVVFALIRAFTRQNVHTLGNAWQDLVRITLWILFPVALIIALFFIQQGVPQNLSAYQPITTLEGAKQLLPMGPVASQEAIKMLGTNGGGFFNANSSHPFENPTALTNLAQMLAIFLIPAALCFAFGEAAGDRRQGRALLWAMSFIFVVCVAVVMWAEVQGNPHLLAAGADSSVNMEGKETRFGVLASSLFAVVTTAASCGAVNAMHDSFTALGGMVPMWLMQIGEVVFGGVGSGLYGMLLFVLLAVFIAGLMIGRTPEYLGKKIDVREMKMTALAILVTPMLVLLGSALAMMTDAGRSAMLNPGPHGFSEVLYAVSSAANNNGSAFAGLSANSPFWNCLLAFCMFVGRFGVIIPVMAIAGSLVSKKVQPASQGTLATHGALFIGLLIGTVLLVGALTFIPALALGPVAEHFSLP</sequence>
<accession>B4TQ23</accession>
<evidence type="ECO:0000255" key="1">
    <source>
        <dbReference type="HAMAP-Rule" id="MF_00275"/>
    </source>
</evidence>
<dbReference type="EMBL" id="CP001127">
    <property type="protein sequence ID" value="ACF92353.1"/>
    <property type="molecule type" value="Genomic_DNA"/>
</dbReference>
<dbReference type="RefSeq" id="WP_000730068.1">
    <property type="nucleotide sequence ID" value="NC_011094.1"/>
</dbReference>
<dbReference type="SMR" id="B4TQ23"/>
<dbReference type="KEGG" id="sew:SeSA_A0864"/>
<dbReference type="HOGENOM" id="CLU_018614_3_0_6"/>
<dbReference type="Proteomes" id="UP000001865">
    <property type="component" value="Chromosome"/>
</dbReference>
<dbReference type="GO" id="GO:0005886">
    <property type="term" value="C:plasma membrane"/>
    <property type="evidence" value="ECO:0007669"/>
    <property type="project" value="UniProtKB-SubCell"/>
</dbReference>
<dbReference type="GO" id="GO:0008556">
    <property type="term" value="F:P-type potassium transmembrane transporter activity"/>
    <property type="evidence" value="ECO:0007669"/>
    <property type="project" value="InterPro"/>
</dbReference>
<dbReference type="GO" id="GO:0030955">
    <property type="term" value="F:potassium ion binding"/>
    <property type="evidence" value="ECO:0007669"/>
    <property type="project" value="UniProtKB-UniRule"/>
</dbReference>
<dbReference type="HAMAP" id="MF_00275">
    <property type="entry name" value="KdpA"/>
    <property type="match status" value="1"/>
</dbReference>
<dbReference type="InterPro" id="IPR004623">
    <property type="entry name" value="KdpA"/>
</dbReference>
<dbReference type="NCBIfam" id="TIGR00680">
    <property type="entry name" value="kdpA"/>
    <property type="match status" value="1"/>
</dbReference>
<dbReference type="PANTHER" id="PTHR30607">
    <property type="entry name" value="POTASSIUM-TRANSPORTING ATPASE A CHAIN"/>
    <property type="match status" value="1"/>
</dbReference>
<dbReference type="PANTHER" id="PTHR30607:SF2">
    <property type="entry name" value="POTASSIUM-TRANSPORTING ATPASE POTASSIUM-BINDING SUBUNIT"/>
    <property type="match status" value="1"/>
</dbReference>
<dbReference type="Pfam" id="PF03814">
    <property type="entry name" value="KdpA"/>
    <property type="match status" value="1"/>
</dbReference>
<dbReference type="PIRSF" id="PIRSF001294">
    <property type="entry name" value="K_ATPaseA"/>
    <property type="match status" value="1"/>
</dbReference>
<name>KDPA_SALSV</name>
<protein>
    <recommendedName>
        <fullName evidence="1">Potassium-transporting ATPase potassium-binding subunit</fullName>
    </recommendedName>
    <alternativeName>
        <fullName evidence="1">ATP phosphohydrolase [potassium-transporting] A chain</fullName>
    </alternativeName>
    <alternativeName>
        <fullName evidence="1">Potassium-binding and translocating subunit A</fullName>
    </alternativeName>
    <alternativeName>
        <fullName evidence="1">Potassium-translocating ATPase A chain</fullName>
    </alternativeName>
</protein>
<proteinExistence type="inferred from homology"/>
<organism>
    <name type="scientific">Salmonella schwarzengrund (strain CVM19633)</name>
    <dbReference type="NCBI Taxonomy" id="439843"/>
    <lineage>
        <taxon>Bacteria</taxon>
        <taxon>Pseudomonadati</taxon>
        <taxon>Pseudomonadota</taxon>
        <taxon>Gammaproteobacteria</taxon>
        <taxon>Enterobacterales</taxon>
        <taxon>Enterobacteriaceae</taxon>
        <taxon>Salmonella</taxon>
    </lineage>
</organism>